<keyword id="KW-0238">DNA-binding</keyword>
<keyword id="KW-0371">Homeobox</keyword>
<keyword id="KW-0539">Nucleus</keyword>
<keyword id="KW-0597">Phosphoprotein</keyword>
<keyword id="KW-1185">Reference proteome</keyword>
<keyword id="KW-0804">Transcription</keyword>
<keyword id="KW-0805">Transcription regulation</keyword>
<gene>
    <name type="primary">Tgif2</name>
</gene>
<name>TGIF2_MOUSE</name>
<sequence length="237" mass="25933">MSDSDLGEDEGLLSLTGKRKRRGNLPKESVKILRDWLYLHRYNAYPSEQEKLSLSGQTNLSVLQICNWFINARRRLLPDMLRKDGKDPNQFTISRRGGKASDVALPRGSSPSLLAVSVPAPTNMLSLSVCSMPLHSGQGEKPAAPFPQVELESPKALVTPASTLTLLTRAEAGSPTGGLFNTPPPTPPEQDKDDFSSFQLLVEVALQRAAEMELQKQQEPAPPLLHTPLPFVSENAK</sequence>
<protein>
    <recommendedName>
        <fullName>Homeobox protein TGIF2</fullName>
    </recommendedName>
    <alternativeName>
        <fullName>5'-TG-3'-interacting factor 2</fullName>
    </alternativeName>
    <alternativeName>
        <fullName>TGF-beta-induced transcription factor 2</fullName>
        <shortName>TGFB-induced factor 2</shortName>
    </alternativeName>
</protein>
<evidence type="ECO:0000250" key="1"/>
<evidence type="ECO:0000250" key="2">
    <source>
        <dbReference type="UniProtKB" id="Q9GZN2"/>
    </source>
</evidence>
<evidence type="ECO:0000255" key="3">
    <source>
        <dbReference type="PROSITE-ProRule" id="PRU00108"/>
    </source>
</evidence>
<evidence type="ECO:0000256" key="4">
    <source>
        <dbReference type="SAM" id="MobiDB-lite"/>
    </source>
</evidence>
<evidence type="ECO:0000305" key="5"/>
<proteinExistence type="evidence at transcript level"/>
<comment type="function">
    <text evidence="1">Transcriptional repressor, which probably repress transcription by binding directly the 5'-CTGTCAA-3' DNA sequence or by interacting with TGF-beta activated SMAD proteins. Probably represses transcription via the recruitment of histone deacetylase proteins (By similarity).</text>
</comment>
<comment type="subunit">
    <text evidence="1">Interacts with the transcriptional modulator SMAD3 and the histone deacetylase HDAC1.</text>
</comment>
<comment type="subcellular location">
    <subcellularLocation>
        <location evidence="3">Nucleus</location>
    </subcellularLocation>
    <text evidence="1">Excluded from nucleoli.</text>
</comment>
<comment type="PTM">
    <text evidence="1">The C-terminal part is phosphorylated in response to EGF signaling by the Ras/MAPK pathway.</text>
</comment>
<comment type="similarity">
    <text evidence="5">Belongs to the TALE/TGIF homeobox family.</text>
</comment>
<organism>
    <name type="scientific">Mus musculus</name>
    <name type="common">Mouse</name>
    <dbReference type="NCBI Taxonomy" id="10090"/>
    <lineage>
        <taxon>Eukaryota</taxon>
        <taxon>Metazoa</taxon>
        <taxon>Chordata</taxon>
        <taxon>Craniata</taxon>
        <taxon>Vertebrata</taxon>
        <taxon>Euteleostomi</taxon>
        <taxon>Mammalia</taxon>
        <taxon>Eutheria</taxon>
        <taxon>Euarchontoglires</taxon>
        <taxon>Glires</taxon>
        <taxon>Rodentia</taxon>
        <taxon>Myomorpha</taxon>
        <taxon>Muroidea</taxon>
        <taxon>Muridae</taxon>
        <taxon>Murinae</taxon>
        <taxon>Mus</taxon>
        <taxon>Mus</taxon>
    </lineage>
</organism>
<dbReference type="EMBL" id="AK029490">
    <property type="protein sequence ID" value="BAC26473.1"/>
    <property type="molecule type" value="mRNA"/>
</dbReference>
<dbReference type="CCDS" id="CCDS16969.1"/>
<dbReference type="RefSeq" id="NP_001278053.1">
    <property type="nucleotide sequence ID" value="NM_001291124.1"/>
</dbReference>
<dbReference type="RefSeq" id="NP_775572.1">
    <property type="nucleotide sequence ID" value="NM_173396.3"/>
</dbReference>
<dbReference type="RefSeq" id="XP_006499414.1">
    <property type="nucleotide sequence ID" value="XM_006499351.5"/>
</dbReference>
<dbReference type="RefSeq" id="XP_006499415.1">
    <property type="nucleotide sequence ID" value="XM_006499352.5"/>
</dbReference>
<dbReference type="RefSeq" id="XP_006499416.1">
    <property type="nucleotide sequence ID" value="XM_006499353.3"/>
</dbReference>
<dbReference type="RefSeq" id="XP_006499417.1">
    <property type="nucleotide sequence ID" value="XM_006499354.5"/>
</dbReference>
<dbReference type="SMR" id="Q8C0Y1"/>
<dbReference type="BioGRID" id="230781">
    <property type="interactions" value="1"/>
</dbReference>
<dbReference type="FunCoup" id="Q8C0Y1">
    <property type="interactions" value="1443"/>
</dbReference>
<dbReference type="STRING" id="10090.ENSMUSP00000096745"/>
<dbReference type="GlyGen" id="Q8C0Y1">
    <property type="glycosylation" value="1 site"/>
</dbReference>
<dbReference type="iPTMnet" id="Q8C0Y1"/>
<dbReference type="PhosphoSitePlus" id="Q8C0Y1"/>
<dbReference type="PaxDb" id="10090-ENSMUSP00000096745"/>
<dbReference type="ProteomicsDB" id="262900"/>
<dbReference type="Antibodypedia" id="26532">
    <property type="antibodies" value="358 antibodies from 32 providers"/>
</dbReference>
<dbReference type="DNASU" id="228839"/>
<dbReference type="Ensembl" id="ENSMUST00000081335.13">
    <property type="protein sequence ID" value="ENSMUSP00000096745.5"/>
    <property type="gene ID" value="ENSMUSG00000062175.14"/>
</dbReference>
<dbReference type="GeneID" id="228839"/>
<dbReference type="KEGG" id="mmu:228839"/>
<dbReference type="UCSC" id="uc008nny.2">
    <property type="organism name" value="mouse"/>
</dbReference>
<dbReference type="AGR" id="MGI:1915299"/>
<dbReference type="CTD" id="60436"/>
<dbReference type="MGI" id="MGI:1915299">
    <property type="gene designation" value="Tgif2"/>
</dbReference>
<dbReference type="VEuPathDB" id="HostDB:ENSMUSG00000062175"/>
<dbReference type="eggNOG" id="KOG0773">
    <property type="taxonomic scope" value="Eukaryota"/>
</dbReference>
<dbReference type="GeneTree" id="ENSGT00940000159849"/>
<dbReference type="InParanoid" id="Q8C0Y1"/>
<dbReference type="OMA" id="CWECSAS"/>
<dbReference type="OrthoDB" id="10056939at2759"/>
<dbReference type="PhylomeDB" id="Q8C0Y1"/>
<dbReference type="TreeFam" id="TF318093"/>
<dbReference type="Reactome" id="R-MMU-2173795">
    <property type="pathway name" value="Downregulation of SMAD2/3:SMAD4 transcriptional activity"/>
</dbReference>
<dbReference type="BioGRID-ORCS" id="228839">
    <property type="hits" value="3 hits in 77 CRISPR screens"/>
</dbReference>
<dbReference type="PRO" id="PR:Q8C0Y1"/>
<dbReference type="Proteomes" id="UP000000589">
    <property type="component" value="Chromosome 2"/>
</dbReference>
<dbReference type="RNAct" id="Q8C0Y1">
    <property type="molecule type" value="protein"/>
</dbReference>
<dbReference type="Bgee" id="ENSMUSG00000062175">
    <property type="expression patterns" value="Expressed in ventricular zone and 172 other cell types or tissues"/>
</dbReference>
<dbReference type="ExpressionAtlas" id="Q8C0Y1">
    <property type="expression patterns" value="baseline and differential"/>
</dbReference>
<dbReference type="GO" id="GO:0005813">
    <property type="term" value="C:centrosome"/>
    <property type="evidence" value="ECO:0007669"/>
    <property type="project" value="Ensembl"/>
</dbReference>
<dbReference type="GO" id="GO:0005654">
    <property type="term" value="C:nucleoplasm"/>
    <property type="evidence" value="ECO:0007669"/>
    <property type="project" value="Ensembl"/>
</dbReference>
<dbReference type="GO" id="GO:1990837">
    <property type="term" value="F:sequence-specific double-stranded DNA binding"/>
    <property type="evidence" value="ECO:0007669"/>
    <property type="project" value="Ensembl"/>
</dbReference>
<dbReference type="GO" id="GO:0035881">
    <property type="term" value="P:amacrine cell differentiation"/>
    <property type="evidence" value="ECO:0000314"/>
    <property type="project" value="MGI"/>
</dbReference>
<dbReference type="GO" id="GO:0000122">
    <property type="term" value="P:negative regulation of transcription by RNA polymerase II"/>
    <property type="evidence" value="ECO:0007669"/>
    <property type="project" value="Ensembl"/>
</dbReference>
<dbReference type="GO" id="GO:0030182">
    <property type="term" value="P:neuron differentiation"/>
    <property type="evidence" value="ECO:0000314"/>
    <property type="project" value="MGI"/>
</dbReference>
<dbReference type="GO" id="GO:0038092">
    <property type="term" value="P:nodal signaling pathway"/>
    <property type="evidence" value="ECO:0000316"/>
    <property type="project" value="MGI"/>
</dbReference>
<dbReference type="GO" id="GO:1902871">
    <property type="term" value="P:positive regulation of amacrine cell differentiation"/>
    <property type="evidence" value="ECO:0000314"/>
    <property type="project" value="MGI"/>
</dbReference>
<dbReference type="GO" id="GO:0010470">
    <property type="term" value="P:regulation of gastrulation"/>
    <property type="evidence" value="ECO:0000316"/>
    <property type="project" value="MGI"/>
</dbReference>
<dbReference type="GO" id="GO:0060041">
    <property type="term" value="P:retina development in camera-type eye"/>
    <property type="evidence" value="ECO:0000314"/>
    <property type="project" value="MGI"/>
</dbReference>
<dbReference type="CDD" id="cd00086">
    <property type="entry name" value="homeodomain"/>
    <property type="match status" value="1"/>
</dbReference>
<dbReference type="FunFam" id="1.10.10.60:FF:000059">
    <property type="entry name" value="TGFB-induced factor homeobox 1"/>
    <property type="match status" value="1"/>
</dbReference>
<dbReference type="Gene3D" id="1.10.10.60">
    <property type="entry name" value="Homeodomain-like"/>
    <property type="match status" value="1"/>
</dbReference>
<dbReference type="InterPro" id="IPR001356">
    <property type="entry name" value="HD"/>
</dbReference>
<dbReference type="InterPro" id="IPR009057">
    <property type="entry name" value="Homeodomain-like_sf"/>
</dbReference>
<dbReference type="InterPro" id="IPR008422">
    <property type="entry name" value="KN_HD"/>
</dbReference>
<dbReference type="InterPro" id="IPR050224">
    <property type="entry name" value="TALE_homeobox"/>
</dbReference>
<dbReference type="PANTHER" id="PTHR11850">
    <property type="entry name" value="HOMEOBOX PROTEIN TRANSCRIPTION FACTORS"/>
    <property type="match status" value="1"/>
</dbReference>
<dbReference type="Pfam" id="PF05920">
    <property type="entry name" value="Homeobox_KN"/>
    <property type="match status" value="1"/>
</dbReference>
<dbReference type="SMART" id="SM00389">
    <property type="entry name" value="HOX"/>
    <property type="match status" value="1"/>
</dbReference>
<dbReference type="SUPFAM" id="SSF46689">
    <property type="entry name" value="Homeodomain-like"/>
    <property type="match status" value="1"/>
</dbReference>
<dbReference type="PROSITE" id="PS50071">
    <property type="entry name" value="HOMEOBOX_2"/>
    <property type="match status" value="1"/>
</dbReference>
<accession>Q8C0Y1</accession>
<feature type="chain" id="PRO_0000049322" description="Homeobox protein TGIF2">
    <location>
        <begin position="1"/>
        <end position="237"/>
    </location>
</feature>
<feature type="DNA-binding region" description="Homeobox; TALE-type" evidence="3">
    <location>
        <begin position="16"/>
        <end position="79"/>
    </location>
</feature>
<feature type="region of interest" description="Disordered" evidence="4">
    <location>
        <begin position="87"/>
        <end position="106"/>
    </location>
</feature>
<feature type="region of interest" description="Repressive function">
    <location>
        <begin position="103"/>
        <end position="237"/>
    </location>
</feature>
<feature type="region of interest" description="Disordered" evidence="4">
    <location>
        <begin position="171"/>
        <end position="196"/>
    </location>
</feature>
<feature type="region of interest" description="Disordered" evidence="4">
    <location>
        <begin position="212"/>
        <end position="237"/>
    </location>
</feature>
<feature type="modified residue" description="Phosphothreonine" evidence="2">
    <location>
        <position position="182"/>
    </location>
</feature>
<feature type="modified residue" description="Phosphothreonine" evidence="2">
    <location>
        <position position="186"/>
    </location>
</feature>
<reference key="1">
    <citation type="journal article" date="2005" name="Science">
        <title>The transcriptional landscape of the mammalian genome.</title>
        <authorList>
            <person name="Carninci P."/>
            <person name="Kasukawa T."/>
            <person name="Katayama S."/>
            <person name="Gough J."/>
            <person name="Frith M.C."/>
            <person name="Maeda N."/>
            <person name="Oyama R."/>
            <person name="Ravasi T."/>
            <person name="Lenhard B."/>
            <person name="Wells C."/>
            <person name="Kodzius R."/>
            <person name="Shimokawa K."/>
            <person name="Bajic V.B."/>
            <person name="Brenner S.E."/>
            <person name="Batalov S."/>
            <person name="Forrest A.R."/>
            <person name="Zavolan M."/>
            <person name="Davis M.J."/>
            <person name="Wilming L.G."/>
            <person name="Aidinis V."/>
            <person name="Allen J.E."/>
            <person name="Ambesi-Impiombato A."/>
            <person name="Apweiler R."/>
            <person name="Aturaliya R.N."/>
            <person name="Bailey T.L."/>
            <person name="Bansal M."/>
            <person name="Baxter L."/>
            <person name="Beisel K.W."/>
            <person name="Bersano T."/>
            <person name="Bono H."/>
            <person name="Chalk A.M."/>
            <person name="Chiu K.P."/>
            <person name="Choudhary V."/>
            <person name="Christoffels A."/>
            <person name="Clutterbuck D.R."/>
            <person name="Crowe M.L."/>
            <person name="Dalla E."/>
            <person name="Dalrymple B.P."/>
            <person name="de Bono B."/>
            <person name="Della Gatta G."/>
            <person name="di Bernardo D."/>
            <person name="Down T."/>
            <person name="Engstrom P."/>
            <person name="Fagiolini M."/>
            <person name="Faulkner G."/>
            <person name="Fletcher C.F."/>
            <person name="Fukushima T."/>
            <person name="Furuno M."/>
            <person name="Futaki S."/>
            <person name="Gariboldi M."/>
            <person name="Georgii-Hemming P."/>
            <person name="Gingeras T.R."/>
            <person name="Gojobori T."/>
            <person name="Green R.E."/>
            <person name="Gustincich S."/>
            <person name="Harbers M."/>
            <person name="Hayashi Y."/>
            <person name="Hensch T.K."/>
            <person name="Hirokawa N."/>
            <person name="Hill D."/>
            <person name="Huminiecki L."/>
            <person name="Iacono M."/>
            <person name="Ikeo K."/>
            <person name="Iwama A."/>
            <person name="Ishikawa T."/>
            <person name="Jakt M."/>
            <person name="Kanapin A."/>
            <person name="Katoh M."/>
            <person name="Kawasawa Y."/>
            <person name="Kelso J."/>
            <person name="Kitamura H."/>
            <person name="Kitano H."/>
            <person name="Kollias G."/>
            <person name="Krishnan S.P."/>
            <person name="Kruger A."/>
            <person name="Kummerfeld S.K."/>
            <person name="Kurochkin I.V."/>
            <person name="Lareau L.F."/>
            <person name="Lazarevic D."/>
            <person name="Lipovich L."/>
            <person name="Liu J."/>
            <person name="Liuni S."/>
            <person name="McWilliam S."/>
            <person name="Madan Babu M."/>
            <person name="Madera M."/>
            <person name="Marchionni L."/>
            <person name="Matsuda H."/>
            <person name="Matsuzawa S."/>
            <person name="Miki H."/>
            <person name="Mignone F."/>
            <person name="Miyake S."/>
            <person name="Morris K."/>
            <person name="Mottagui-Tabar S."/>
            <person name="Mulder N."/>
            <person name="Nakano N."/>
            <person name="Nakauchi H."/>
            <person name="Ng P."/>
            <person name="Nilsson R."/>
            <person name="Nishiguchi S."/>
            <person name="Nishikawa S."/>
            <person name="Nori F."/>
            <person name="Ohara O."/>
            <person name="Okazaki Y."/>
            <person name="Orlando V."/>
            <person name="Pang K.C."/>
            <person name="Pavan W.J."/>
            <person name="Pavesi G."/>
            <person name="Pesole G."/>
            <person name="Petrovsky N."/>
            <person name="Piazza S."/>
            <person name="Reed J."/>
            <person name="Reid J.F."/>
            <person name="Ring B.Z."/>
            <person name="Ringwald M."/>
            <person name="Rost B."/>
            <person name="Ruan Y."/>
            <person name="Salzberg S.L."/>
            <person name="Sandelin A."/>
            <person name="Schneider C."/>
            <person name="Schoenbach C."/>
            <person name="Sekiguchi K."/>
            <person name="Semple C.A."/>
            <person name="Seno S."/>
            <person name="Sessa L."/>
            <person name="Sheng Y."/>
            <person name="Shibata Y."/>
            <person name="Shimada H."/>
            <person name="Shimada K."/>
            <person name="Silva D."/>
            <person name="Sinclair B."/>
            <person name="Sperling S."/>
            <person name="Stupka E."/>
            <person name="Sugiura K."/>
            <person name="Sultana R."/>
            <person name="Takenaka Y."/>
            <person name="Taki K."/>
            <person name="Tammoja K."/>
            <person name="Tan S.L."/>
            <person name="Tang S."/>
            <person name="Taylor M.S."/>
            <person name="Tegner J."/>
            <person name="Teichmann S.A."/>
            <person name="Ueda H.R."/>
            <person name="van Nimwegen E."/>
            <person name="Verardo R."/>
            <person name="Wei C.L."/>
            <person name="Yagi K."/>
            <person name="Yamanishi H."/>
            <person name="Zabarovsky E."/>
            <person name="Zhu S."/>
            <person name="Zimmer A."/>
            <person name="Hide W."/>
            <person name="Bult C."/>
            <person name="Grimmond S.M."/>
            <person name="Teasdale R.D."/>
            <person name="Liu E.T."/>
            <person name="Brusic V."/>
            <person name="Quackenbush J."/>
            <person name="Wahlestedt C."/>
            <person name="Mattick J.S."/>
            <person name="Hume D.A."/>
            <person name="Kai C."/>
            <person name="Sasaki D."/>
            <person name="Tomaru Y."/>
            <person name="Fukuda S."/>
            <person name="Kanamori-Katayama M."/>
            <person name="Suzuki M."/>
            <person name="Aoki J."/>
            <person name="Arakawa T."/>
            <person name="Iida J."/>
            <person name="Imamura K."/>
            <person name="Itoh M."/>
            <person name="Kato T."/>
            <person name="Kawaji H."/>
            <person name="Kawagashira N."/>
            <person name="Kawashima T."/>
            <person name="Kojima M."/>
            <person name="Kondo S."/>
            <person name="Konno H."/>
            <person name="Nakano K."/>
            <person name="Ninomiya N."/>
            <person name="Nishio T."/>
            <person name="Okada M."/>
            <person name="Plessy C."/>
            <person name="Shibata K."/>
            <person name="Shiraki T."/>
            <person name="Suzuki S."/>
            <person name="Tagami M."/>
            <person name="Waki K."/>
            <person name="Watahiki A."/>
            <person name="Okamura-Oho Y."/>
            <person name="Suzuki H."/>
            <person name="Kawai J."/>
            <person name="Hayashizaki Y."/>
        </authorList>
    </citation>
    <scope>NUCLEOTIDE SEQUENCE [LARGE SCALE MRNA]</scope>
    <source>
        <strain>C57BL/6J</strain>
        <tissue>Testis</tissue>
    </source>
</reference>